<gene>
    <name type="ordered locus">Os01g0237000</name>
    <name type="ordered locus">LOC_Os01g13560</name>
    <name type="ORF">OsJ_001011</name>
    <name type="ORF">P0708G02.36</name>
</gene>
<proteinExistence type="evidence at transcript level"/>
<feature type="chain" id="PRO_0000370298" description="CASP-like protein 1C1">
    <location>
        <begin position="1"/>
        <end position="162"/>
    </location>
</feature>
<feature type="topological domain" description="Cytoplasmic" evidence="2">
    <location>
        <begin position="1"/>
        <end position="7"/>
    </location>
</feature>
<feature type="transmembrane region" description="Helical" evidence="2">
    <location>
        <begin position="8"/>
        <end position="28"/>
    </location>
</feature>
<feature type="topological domain" description="Extracellular" evidence="2">
    <location>
        <begin position="29"/>
        <end position="52"/>
    </location>
</feature>
<feature type="transmembrane region" description="Helical" evidence="2">
    <location>
        <begin position="53"/>
        <end position="73"/>
    </location>
</feature>
<feature type="topological domain" description="Cytoplasmic" evidence="2">
    <location>
        <begin position="74"/>
        <end position="83"/>
    </location>
</feature>
<feature type="transmembrane region" description="Helical" evidence="2">
    <location>
        <begin position="84"/>
        <end position="104"/>
    </location>
</feature>
<feature type="topological domain" description="Extracellular" evidence="2">
    <location>
        <begin position="105"/>
        <end position="135"/>
    </location>
</feature>
<feature type="transmembrane region" description="Helical" evidence="2">
    <location>
        <begin position="136"/>
        <end position="156"/>
    </location>
</feature>
<feature type="topological domain" description="Cytoplasmic" evidence="2">
    <location>
        <begin position="157"/>
        <end position="162"/>
    </location>
</feature>
<dbReference type="EMBL" id="AP001539">
    <property type="protein sequence ID" value="BAA92922.1"/>
    <property type="molecule type" value="Genomic_DNA"/>
</dbReference>
<dbReference type="EMBL" id="AP008207">
    <property type="protein sequence ID" value="BAF04446.1"/>
    <property type="molecule type" value="Genomic_DNA"/>
</dbReference>
<dbReference type="EMBL" id="AP014957">
    <property type="protein sequence ID" value="BAS71236.1"/>
    <property type="molecule type" value="Genomic_DNA"/>
</dbReference>
<dbReference type="EMBL" id="CM000138">
    <property type="protein sequence ID" value="EAZ11186.1"/>
    <property type="molecule type" value="Genomic_DNA"/>
</dbReference>
<dbReference type="EMBL" id="AK062426">
    <property type="protein sequence ID" value="BAG88309.1"/>
    <property type="molecule type" value="mRNA"/>
</dbReference>
<dbReference type="RefSeq" id="XP_015634431.1">
    <property type="nucleotide sequence ID" value="XM_015778945.1"/>
</dbReference>
<dbReference type="PaxDb" id="39947-Q9LI17"/>
<dbReference type="EnsemblPlants" id="Os01t0237000-01">
    <property type="protein sequence ID" value="Os01t0237000-01"/>
    <property type="gene ID" value="Os01g0237000"/>
</dbReference>
<dbReference type="Gramene" id="Os01t0237000-01">
    <property type="protein sequence ID" value="Os01t0237000-01"/>
    <property type="gene ID" value="Os01g0237000"/>
</dbReference>
<dbReference type="KEGG" id="dosa:Os01g0237000"/>
<dbReference type="eggNOG" id="ENOG502RZXX">
    <property type="taxonomic scope" value="Eukaryota"/>
</dbReference>
<dbReference type="HOGENOM" id="CLU_066104_3_0_1"/>
<dbReference type="InParanoid" id="Q9LI17"/>
<dbReference type="OMA" id="MAMSHET"/>
<dbReference type="OrthoDB" id="1906221at2759"/>
<dbReference type="Proteomes" id="UP000000763">
    <property type="component" value="Chromosome 1"/>
</dbReference>
<dbReference type="Proteomes" id="UP000007752">
    <property type="component" value="Chromosome 1"/>
</dbReference>
<dbReference type="Proteomes" id="UP000059680">
    <property type="component" value="Chromosome 1"/>
</dbReference>
<dbReference type="GO" id="GO:0005886">
    <property type="term" value="C:plasma membrane"/>
    <property type="evidence" value="ECO:0000318"/>
    <property type="project" value="GO_Central"/>
</dbReference>
<dbReference type="InterPro" id="IPR006459">
    <property type="entry name" value="CASP/CASPL"/>
</dbReference>
<dbReference type="InterPro" id="IPR006702">
    <property type="entry name" value="CASP_dom"/>
</dbReference>
<dbReference type="InterPro" id="IPR044173">
    <property type="entry name" value="CASPL"/>
</dbReference>
<dbReference type="NCBIfam" id="TIGR01569">
    <property type="entry name" value="A_tha_TIGR01569"/>
    <property type="match status" value="1"/>
</dbReference>
<dbReference type="PANTHER" id="PTHR36488">
    <property type="entry name" value="CASP-LIKE PROTEIN 1U1"/>
    <property type="match status" value="1"/>
</dbReference>
<dbReference type="PANTHER" id="PTHR36488:SF8">
    <property type="entry name" value="CASP-LIKE PROTEIN 1U1"/>
    <property type="match status" value="1"/>
</dbReference>
<dbReference type="Pfam" id="PF04535">
    <property type="entry name" value="CASP_dom"/>
    <property type="match status" value="1"/>
</dbReference>
<evidence type="ECO:0000250" key="1"/>
<evidence type="ECO:0000255" key="2"/>
<evidence type="ECO:0000305" key="3"/>
<sequence length="162" mass="16979">MFSAKARWIVAVVLRVAAAGAAAVAAVLMAMSHDEVIVYGMEVQAKFRYTPSLVFFVAANAAVSACSLVVLLVPSSTSKLAARLLLMADVVLGMVLAGAFAAAGAMAELGKNGNSHAGWIAICVQVPLFCDRVRSALVAGSATIVLYYLMLMYSIYTLPMFP</sequence>
<name>CSPLB_ORYSJ</name>
<keyword id="KW-1003">Cell membrane</keyword>
<keyword id="KW-0472">Membrane</keyword>
<keyword id="KW-1185">Reference proteome</keyword>
<keyword id="KW-0812">Transmembrane</keyword>
<keyword id="KW-1133">Transmembrane helix</keyword>
<protein>
    <recommendedName>
        <fullName>CASP-like protein 1C1</fullName>
        <shortName>OsCASPL1C1</shortName>
    </recommendedName>
</protein>
<organism>
    <name type="scientific">Oryza sativa subsp. japonica</name>
    <name type="common">Rice</name>
    <dbReference type="NCBI Taxonomy" id="39947"/>
    <lineage>
        <taxon>Eukaryota</taxon>
        <taxon>Viridiplantae</taxon>
        <taxon>Streptophyta</taxon>
        <taxon>Embryophyta</taxon>
        <taxon>Tracheophyta</taxon>
        <taxon>Spermatophyta</taxon>
        <taxon>Magnoliopsida</taxon>
        <taxon>Liliopsida</taxon>
        <taxon>Poales</taxon>
        <taxon>Poaceae</taxon>
        <taxon>BOP clade</taxon>
        <taxon>Oryzoideae</taxon>
        <taxon>Oryzeae</taxon>
        <taxon>Oryzinae</taxon>
        <taxon>Oryza</taxon>
        <taxon>Oryza sativa</taxon>
    </lineage>
</organism>
<accession>Q9LI17</accession>
<accession>A0A0P0V043</accession>
<comment type="subunit">
    <text evidence="1">Homodimer and heterodimers.</text>
</comment>
<comment type="subcellular location">
    <subcellularLocation>
        <location evidence="1">Cell membrane</location>
        <topology evidence="1">Multi-pass membrane protein</topology>
    </subcellularLocation>
</comment>
<comment type="similarity">
    <text evidence="3">Belongs to the Casparian strip membrane proteins (CASP) family.</text>
</comment>
<reference key="1">
    <citation type="journal article" date="2002" name="Nature">
        <title>The genome sequence and structure of rice chromosome 1.</title>
        <authorList>
            <person name="Sasaki T."/>
            <person name="Matsumoto T."/>
            <person name="Yamamoto K."/>
            <person name="Sakata K."/>
            <person name="Baba T."/>
            <person name="Katayose Y."/>
            <person name="Wu J."/>
            <person name="Niimura Y."/>
            <person name="Cheng Z."/>
            <person name="Nagamura Y."/>
            <person name="Antonio B.A."/>
            <person name="Kanamori H."/>
            <person name="Hosokawa S."/>
            <person name="Masukawa M."/>
            <person name="Arikawa K."/>
            <person name="Chiden Y."/>
            <person name="Hayashi M."/>
            <person name="Okamoto M."/>
            <person name="Ando T."/>
            <person name="Aoki H."/>
            <person name="Arita K."/>
            <person name="Hamada M."/>
            <person name="Harada C."/>
            <person name="Hijishita S."/>
            <person name="Honda M."/>
            <person name="Ichikawa Y."/>
            <person name="Idonuma A."/>
            <person name="Iijima M."/>
            <person name="Ikeda M."/>
            <person name="Ikeno M."/>
            <person name="Ito S."/>
            <person name="Ito T."/>
            <person name="Ito Y."/>
            <person name="Ito Y."/>
            <person name="Iwabuchi A."/>
            <person name="Kamiya K."/>
            <person name="Karasawa W."/>
            <person name="Katagiri S."/>
            <person name="Kikuta A."/>
            <person name="Kobayashi N."/>
            <person name="Kono I."/>
            <person name="Machita K."/>
            <person name="Maehara T."/>
            <person name="Mizuno H."/>
            <person name="Mizubayashi T."/>
            <person name="Mukai Y."/>
            <person name="Nagasaki H."/>
            <person name="Nakashima M."/>
            <person name="Nakama Y."/>
            <person name="Nakamichi Y."/>
            <person name="Nakamura M."/>
            <person name="Namiki N."/>
            <person name="Negishi M."/>
            <person name="Ohta I."/>
            <person name="Ono N."/>
            <person name="Saji S."/>
            <person name="Sakai K."/>
            <person name="Shibata M."/>
            <person name="Shimokawa T."/>
            <person name="Shomura A."/>
            <person name="Song J."/>
            <person name="Takazaki Y."/>
            <person name="Terasawa K."/>
            <person name="Tsuji K."/>
            <person name="Waki K."/>
            <person name="Yamagata H."/>
            <person name="Yamane H."/>
            <person name="Yoshiki S."/>
            <person name="Yoshihara R."/>
            <person name="Yukawa K."/>
            <person name="Zhong H."/>
            <person name="Iwama H."/>
            <person name="Endo T."/>
            <person name="Ito H."/>
            <person name="Hahn J.H."/>
            <person name="Kim H.-I."/>
            <person name="Eun M.-Y."/>
            <person name="Yano M."/>
            <person name="Jiang J."/>
            <person name="Gojobori T."/>
        </authorList>
    </citation>
    <scope>NUCLEOTIDE SEQUENCE [LARGE SCALE GENOMIC DNA]</scope>
    <source>
        <strain>cv. Nipponbare</strain>
    </source>
</reference>
<reference key="2">
    <citation type="journal article" date="2005" name="Nature">
        <title>The map-based sequence of the rice genome.</title>
        <authorList>
            <consortium name="International rice genome sequencing project (IRGSP)"/>
        </authorList>
    </citation>
    <scope>NUCLEOTIDE SEQUENCE [LARGE SCALE GENOMIC DNA]</scope>
    <source>
        <strain>cv. Nipponbare</strain>
    </source>
</reference>
<reference key="3">
    <citation type="journal article" date="2008" name="Nucleic Acids Res.">
        <title>The rice annotation project database (RAP-DB): 2008 update.</title>
        <authorList>
            <consortium name="The rice annotation project (RAP)"/>
        </authorList>
    </citation>
    <scope>GENOME REANNOTATION</scope>
    <source>
        <strain>cv. Nipponbare</strain>
    </source>
</reference>
<reference key="4">
    <citation type="journal article" date="2013" name="Rice">
        <title>Improvement of the Oryza sativa Nipponbare reference genome using next generation sequence and optical map data.</title>
        <authorList>
            <person name="Kawahara Y."/>
            <person name="de la Bastide M."/>
            <person name="Hamilton J.P."/>
            <person name="Kanamori H."/>
            <person name="McCombie W.R."/>
            <person name="Ouyang S."/>
            <person name="Schwartz D.C."/>
            <person name="Tanaka T."/>
            <person name="Wu J."/>
            <person name="Zhou S."/>
            <person name="Childs K.L."/>
            <person name="Davidson R.M."/>
            <person name="Lin H."/>
            <person name="Quesada-Ocampo L."/>
            <person name="Vaillancourt B."/>
            <person name="Sakai H."/>
            <person name="Lee S.S."/>
            <person name="Kim J."/>
            <person name="Numa H."/>
            <person name="Itoh T."/>
            <person name="Buell C.R."/>
            <person name="Matsumoto T."/>
        </authorList>
    </citation>
    <scope>GENOME REANNOTATION</scope>
    <source>
        <strain>cv. Nipponbare</strain>
    </source>
</reference>
<reference key="5">
    <citation type="journal article" date="2005" name="PLoS Biol.">
        <title>The genomes of Oryza sativa: a history of duplications.</title>
        <authorList>
            <person name="Yu J."/>
            <person name="Wang J."/>
            <person name="Lin W."/>
            <person name="Li S."/>
            <person name="Li H."/>
            <person name="Zhou J."/>
            <person name="Ni P."/>
            <person name="Dong W."/>
            <person name="Hu S."/>
            <person name="Zeng C."/>
            <person name="Zhang J."/>
            <person name="Zhang Y."/>
            <person name="Li R."/>
            <person name="Xu Z."/>
            <person name="Li S."/>
            <person name="Li X."/>
            <person name="Zheng H."/>
            <person name="Cong L."/>
            <person name="Lin L."/>
            <person name="Yin J."/>
            <person name="Geng J."/>
            <person name="Li G."/>
            <person name="Shi J."/>
            <person name="Liu J."/>
            <person name="Lv H."/>
            <person name="Li J."/>
            <person name="Wang J."/>
            <person name="Deng Y."/>
            <person name="Ran L."/>
            <person name="Shi X."/>
            <person name="Wang X."/>
            <person name="Wu Q."/>
            <person name="Li C."/>
            <person name="Ren X."/>
            <person name="Wang J."/>
            <person name="Wang X."/>
            <person name="Li D."/>
            <person name="Liu D."/>
            <person name="Zhang X."/>
            <person name="Ji Z."/>
            <person name="Zhao W."/>
            <person name="Sun Y."/>
            <person name="Zhang Z."/>
            <person name="Bao J."/>
            <person name="Han Y."/>
            <person name="Dong L."/>
            <person name="Ji J."/>
            <person name="Chen P."/>
            <person name="Wu S."/>
            <person name="Liu J."/>
            <person name="Xiao Y."/>
            <person name="Bu D."/>
            <person name="Tan J."/>
            <person name="Yang L."/>
            <person name="Ye C."/>
            <person name="Zhang J."/>
            <person name="Xu J."/>
            <person name="Zhou Y."/>
            <person name="Yu Y."/>
            <person name="Zhang B."/>
            <person name="Zhuang S."/>
            <person name="Wei H."/>
            <person name="Liu B."/>
            <person name="Lei M."/>
            <person name="Yu H."/>
            <person name="Li Y."/>
            <person name="Xu H."/>
            <person name="Wei S."/>
            <person name="He X."/>
            <person name="Fang L."/>
            <person name="Zhang Z."/>
            <person name="Zhang Y."/>
            <person name="Huang X."/>
            <person name="Su Z."/>
            <person name="Tong W."/>
            <person name="Li J."/>
            <person name="Tong Z."/>
            <person name="Li S."/>
            <person name="Ye J."/>
            <person name="Wang L."/>
            <person name="Fang L."/>
            <person name="Lei T."/>
            <person name="Chen C.-S."/>
            <person name="Chen H.-C."/>
            <person name="Xu Z."/>
            <person name="Li H."/>
            <person name="Huang H."/>
            <person name="Zhang F."/>
            <person name="Xu H."/>
            <person name="Li N."/>
            <person name="Zhao C."/>
            <person name="Li S."/>
            <person name="Dong L."/>
            <person name="Huang Y."/>
            <person name="Li L."/>
            <person name="Xi Y."/>
            <person name="Qi Q."/>
            <person name="Li W."/>
            <person name="Zhang B."/>
            <person name="Hu W."/>
            <person name="Zhang Y."/>
            <person name="Tian X."/>
            <person name="Jiao Y."/>
            <person name="Liang X."/>
            <person name="Jin J."/>
            <person name="Gao L."/>
            <person name="Zheng W."/>
            <person name="Hao B."/>
            <person name="Liu S.-M."/>
            <person name="Wang W."/>
            <person name="Yuan L."/>
            <person name="Cao M."/>
            <person name="McDermott J."/>
            <person name="Samudrala R."/>
            <person name="Wang J."/>
            <person name="Wong G.K.-S."/>
            <person name="Yang H."/>
        </authorList>
    </citation>
    <scope>NUCLEOTIDE SEQUENCE [LARGE SCALE GENOMIC DNA]</scope>
    <source>
        <strain>cv. Nipponbare</strain>
    </source>
</reference>
<reference key="6">
    <citation type="journal article" date="2003" name="Science">
        <title>Collection, mapping, and annotation of over 28,000 cDNA clones from japonica rice.</title>
        <authorList>
            <consortium name="The rice full-length cDNA consortium"/>
        </authorList>
    </citation>
    <scope>NUCLEOTIDE SEQUENCE [LARGE SCALE MRNA]</scope>
    <source>
        <strain>cv. Nipponbare</strain>
    </source>
</reference>
<reference key="7">
    <citation type="journal article" date="2014" name="Plant Physiol.">
        <title>Functional and evolutionary analysis of the CASPARIAN STRIP MEMBRANE DOMAIN PROTEIN family.</title>
        <authorList>
            <person name="Roppolo D."/>
            <person name="Boeckmann B."/>
            <person name="Pfister A."/>
            <person name="Boutet E."/>
            <person name="Rubio M.C."/>
            <person name="Denervaud-Tendon V."/>
            <person name="Vermeer J.E."/>
            <person name="Gheyselinck J."/>
            <person name="Xenarios I."/>
            <person name="Geldner N."/>
        </authorList>
    </citation>
    <scope>GENE FAMILY</scope>
    <scope>NOMENCLATURE</scope>
</reference>